<name>CHXI_ASPFL</name>
<proteinExistence type="evidence at protein level"/>
<reference evidence="2" key="1">
    <citation type="journal article" date="2003" name="J. Microbiol. Biotechnol.">
        <title>Purification and characterization of the exo-beta-D-glucosaminidase from the fungus, A. flavus IAM2044.</title>
        <authorList>
            <person name="Ji J.-H."/>
            <person name="Hur J.-W."/>
        </authorList>
    </citation>
    <scope>PROTEIN SEQUENCE</scope>
    <scope>FUNCTION</scope>
    <source>
        <strain>IAM 2044</strain>
    </source>
</reference>
<sequence length="17" mass="1754">LPTGPNNPTTLDNSSII</sequence>
<protein>
    <recommendedName>
        <fullName>Exochitosanase</fullName>
        <ecNumber>3.2.1.-</ecNumber>
    </recommendedName>
    <alternativeName>
        <fullName>Exo-beta-D-glucosaminidase</fullName>
    </alternativeName>
</protein>
<evidence type="ECO:0000269" key="1">
    <source ref="1"/>
</evidence>
<evidence type="ECO:0000305" key="2"/>
<comment type="function">
    <text evidence="1 2">Exohydrolysis of beta-1,4-linkages between N-acetyl-D-glucosamine and D-glucosamine residues, and D-glucosamine and D-glucosamine residues in chitosan.</text>
</comment>
<feature type="chain" id="PRO_0000089669" description="Exochitosanase">
    <location>
        <begin position="1"/>
        <end position="17" status="greater than"/>
    </location>
</feature>
<feature type="non-terminal residue" evidence="2">
    <location>
        <position position="17"/>
    </location>
</feature>
<accession>P83488</accession>
<organism evidence="2">
    <name type="scientific">Aspergillus flavus</name>
    <dbReference type="NCBI Taxonomy" id="5059"/>
    <lineage>
        <taxon>Eukaryota</taxon>
        <taxon>Fungi</taxon>
        <taxon>Dikarya</taxon>
        <taxon>Ascomycota</taxon>
        <taxon>Pezizomycotina</taxon>
        <taxon>Eurotiomycetes</taxon>
        <taxon>Eurotiomycetidae</taxon>
        <taxon>Eurotiales</taxon>
        <taxon>Aspergillaceae</taxon>
        <taxon>Aspergillus</taxon>
        <taxon>Aspergillus subgen. Circumdati</taxon>
    </lineage>
</organism>
<dbReference type="EC" id="3.2.1.-"/>
<dbReference type="GO" id="GO:0016798">
    <property type="term" value="F:hydrolase activity, acting on glycosyl bonds"/>
    <property type="evidence" value="ECO:0007669"/>
    <property type="project" value="UniProtKB-KW"/>
</dbReference>
<keyword id="KW-0903">Direct protein sequencing</keyword>
<keyword id="KW-0326">Glycosidase</keyword>
<keyword id="KW-0378">Hydrolase</keyword>